<reference key="1">
    <citation type="journal article" date="1996" name="J. Neurochem.">
        <title>Cloning and characterization of aplycalcin and Aplysia neurocalcin, two new members of the calmodulin superfamily of small calcium-binding proteins.</title>
        <authorList>
            <person name="Dyer J.R."/>
            <person name="Sossin W.S."/>
            <person name="Klein M."/>
        </authorList>
    </citation>
    <scope>NUCLEOTIDE SEQUENCE [MRNA]</scope>
</reference>
<feature type="initiator methionine" description="Removed" evidence="1">
    <location>
        <position position="1"/>
    </location>
</feature>
<feature type="chain" id="PRO_0000073797" description="Neuronal calcium sensor 1">
    <location>
        <begin position="2"/>
        <end position="191"/>
    </location>
</feature>
<feature type="domain" description="EF-hand 1" evidence="4">
    <location>
        <begin position="24"/>
        <end position="59"/>
    </location>
</feature>
<feature type="domain" description="EF-hand 2" evidence="3">
    <location>
        <begin position="60"/>
        <end position="95"/>
    </location>
</feature>
<feature type="domain" description="EF-hand 3" evidence="3">
    <location>
        <begin position="96"/>
        <end position="131"/>
    </location>
</feature>
<feature type="domain" description="EF-hand 4" evidence="3">
    <location>
        <begin position="144"/>
        <end position="179"/>
    </location>
</feature>
<feature type="binding site" evidence="3">
    <location>
        <position position="73"/>
    </location>
    <ligand>
        <name>Ca(2+)</name>
        <dbReference type="ChEBI" id="CHEBI:29108"/>
        <label>1</label>
    </ligand>
</feature>
<feature type="binding site" evidence="3">
    <location>
        <position position="75"/>
    </location>
    <ligand>
        <name>Ca(2+)</name>
        <dbReference type="ChEBI" id="CHEBI:29108"/>
        <label>1</label>
    </ligand>
</feature>
<feature type="binding site" evidence="3">
    <location>
        <position position="77"/>
    </location>
    <ligand>
        <name>Ca(2+)</name>
        <dbReference type="ChEBI" id="CHEBI:29108"/>
        <label>1</label>
    </ligand>
</feature>
<feature type="binding site" evidence="3">
    <location>
        <position position="84"/>
    </location>
    <ligand>
        <name>Ca(2+)</name>
        <dbReference type="ChEBI" id="CHEBI:29108"/>
        <label>1</label>
    </ligand>
</feature>
<feature type="binding site" evidence="3">
    <location>
        <position position="109"/>
    </location>
    <ligand>
        <name>Ca(2+)</name>
        <dbReference type="ChEBI" id="CHEBI:29108"/>
        <label>2</label>
    </ligand>
</feature>
<feature type="binding site" evidence="3">
    <location>
        <position position="111"/>
    </location>
    <ligand>
        <name>Ca(2+)</name>
        <dbReference type="ChEBI" id="CHEBI:29108"/>
        <label>2</label>
    </ligand>
</feature>
<feature type="binding site" evidence="3">
    <location>
        <position position="113"/>
    </location>
    <ligand>
        <name>Ca(2+)</name>
        <dbReference type="ChEBI" id="CHEBI:29108"/>
        <label>2</label>
    </ligand>
</feature>
<feature type="binding site" evidence="3">
    <location>
        <position position="120"/>
    </location>
    <ligand>
        <name>Ca(2+)</name>
        <dbReference type="ChEBI" id="CHEBI:29108"/>
        <label>2</label>
    </ligand>
</feature>
<feature type="binding site" evidence="3">
    <location>
        <position position="157"/>
    </location>
    <ligand>
        <name>Ca(2+)</name>
        <dbReference type="ChEBI" id="CHEBI:29108"/>
        <label>3</label>
    </ligand>
</feature>
<feature type="binding site" evidence="3">
    <location>
        <position position="159"/>
    </location>
    <ligand>
        <name>Ca(2+)</name>
        <dbReference type="ChEBI" id="CHEBI:29108"/>
        <label>3</label>
    </ligand>
</feature>
<feature type="binding site" evidence="3">
    <location>
        <position position="161"/>
    </location>
    <ligand>
        <name>Ca(2+)</name>
        <dbReference type="ChEBI" id="CHEBI:29108"/>
        <label>3</label>
    </ligand>
</feature>
<feature type="binding site" evidence="3">
    <location>
        <position position="163"/>
    </location>
    <ligand>
        <name>Ca(2+)</name>
        <dbReference type="ChEBI" id="CHEBI:29108"/>
        <label>3</label>
    </ligand>
</feature>
<feature type="binding site" evidence="3">
    <location>
        <position position="168"/>
    </location>
    <ligand>
        <name>Ca(2+)</name>
        <dbReference type="ChEBI" id="CHEBI:29108"/>
        <label>3</label>
    </ligand>
</feature>
<feature type="lipid moiety-binding region" description="N-myristoyl glycine" evidence="2">
    <location>
        <position position="2"/>
    </location>
</feature>
<organism>
    <name type="scientific">Aplysia californica</name>
    <name type="common">California sea hare</name>
    <dbReference type="NCBI Taxonomy" id="6500"/>
    <lineage>
        <taxon>Eukaryota</taxon>
        <taxon>Metazoa</taxon>
        <taxon>Spiralia</taxon>
        <taxon>Lophotrochozoa</taxon>
        <taxon>Mollusca</taxon>
        <taxon>Gastropoda</taxon>
        <taxon>Heterobranchia</taxon>
        <taxon>Euthyneura</taxon>
        <taxon>Tectipleura</taxon>
        <taxon>Aplysiida</taxon>
        <taxon>Aplysioidea</taxon>
        <taxon>Aplysiidae</taxon>
        <taxon>Aplysia</taxon>
    </lineage>
</organism>
<dbReference type="EMBL" id="U61222">
    <property type="protein sequence ID" value="AAB36879.1"/>
    <property type="molecule type" value="mRNA"/>
</dbReference>
<dbReference type="RefSeq" id="NP_001191468.1">
    <property type="nucleotide sequence ID" value="NM_001204539.1"/>
</dbReference>
<dbReference type="SMR" id="Q16981"/>
<dbReference type="GeneID" id="100533222"/>
<dbReference type="OrthoDB" id="191686at2759"/>
<dbReference type="Proteomes" id="UP000694888">
    <property type="component" value="Unplaced"/>
</dbReference>
<dbReference type="GO" id="GO:0005509">
    <property type="term" value="F:calcium ion binding"/>
    <property type="evidence" value="ECO:0007669"/>
    <property type="project" value="InterPro"/>
</dbReference>
<dbReference type="GO" id="GO:0008048">
    <property type="term" value="F:calcium sensitive guanylate cyclase activator activity"/>
    <property type="evidence" value="ECO:0007669"/>
    <property type="project" value="TreeGrafter"/>
</dbReference>
<dbReference type="CDD" id="cd00051">
    <property type="entry name" value="EFh"/>
    <property type="match status" value="2"/>
</dbReference>
<dbReference type="FunFam" id="1.10.238.10:FF:000009">
    <property type="entry name" value="Visinin-like protein 1"/>
    <property type="match status" value="1"/>
</dbReference>
<dbReference type="Gene3D" id="1.10.238.10">
    <property type="entry name" value="EF-hand"/>
    <property type="match status" value="1"/>
</dbReference>
<dbReference type="InterPro" id="IPR011992">
    <property type="entry name" value="EF-hand-dom_pair"/>
</dbReference>
<dbReference type="InterPro" id="IPR018247">
    <property type="entry name" value="EF_Hand_1_Ca_BS"/>
</dbReference>
<dbReference type="InterPro" id="IPR002048">
    <property type="entry name" value="EF_hand_dom"/>
</dbReference>
<dbReference type="InterPro" id="IPR028846">
    <property type="entry name" value="Recoverin"/>
</dbReference>
<dbReference type="PANTHER" id="PTHR23055">
    <property type="entry name" value="CALCIUM BINDING PROTEINS"/>
    <property type="match status" value="1"/>
</dbReference>
<dbReference type="PANTHER" id="PTHR23055:SF198">
    <property type="entry name" value="NEURONAL CALCIUM SENSOR 1"/>
    <property type="match status" value="1"/>
</dbReference>
<dbReference type="Pfam" id="PF00036">
    <property type="entry name" value="EF-hand_1"/>
    <property type="match status" value="1"/>
</dbReference>
<dbReference type="Pfam" id="PF13499">
    <property type="entry name" value="EF-hand_7"/>
    <property type="match status" value="1"/>
</dbReference>
<dbReference type="PRINTS" id="PR00450">
    <property type="entry name" value="RECOVERIN"/>
</dbReference>
<dbReference type="SMART" id="SM00054">
    <property type="entry name" value="EFh"/>
    <property type="match status" value="3"/>
</dbReference>
<dbReference type="SUPFAM" id="SSF47473">
    <property type="entry name" value="EF-hand"/>
    <property type="match status" value="1"/>
</dbReference>
<dbReference type="PROSITE" id="PS00018">
    <property type="entry name" value="EF_HAND_1"/>
    <property type="match status" value="3"/>
</dbReference>
<dbReference type="PROSITE" id="PS50222">
    <property type="entry name" value="EF_HAND_2"/>
    <property type="match status" value="3"/>
</dbReference>
<comment type="function">
    <text evidence="1">Neuronal calcium sensor, regulator of G protein-coupled receptor phosphorylation in a calcium dependent manner. Regulates neurite extension and branching by activity-dependent (Ca2+) influx in growth cones (By similarity).</text>
</comment>
<comment type="miscellaneous">
    <text evidence="1">Binds 3 calcium ions via the second, third and fourth EF-hand.</text>
</comment>
<comment type="similarity">
    <text evidence="4">Belongs to the recoverin family.</text>
</comment>
<sequence>MGKRASKLKPEEVEELKQQTYFTEAEIKQWHKGFRKDCPDGKLTLEGFTKIYQQFFPFGDPSKFANFVFNVFDENKDGFISFGEFLQALSVTSRGTVEEKLKWAFRLYDLDNDGFITRDELLDIVDAIYRMVGESVRLPEEENTPEKRVNRIFQVMDKNKDDKLTFDEFLEGSKEDPTIIQALTLCDSGQA</sequence>
<protein>
    <recommendedName>
        <fullName>Neuronal calcium sensor 1</fullName>
        <shortName>NCS-1</shortName>
    </recommendedName>
    <alternativeName>
        <fullName>Aplycalcin</fullName>
    </alternativeName>
</protein>
<name>NCS1_APLCA</name>
<keyword id="KW-0106">Calcium</keyword>
<keyword id="KW-0449">Lipoprotein</keyword>
<keyword id="KW-0479">Metal-binding</keyword>
<keyword id="KW-0519">Myristate</keyword>
<keyword id="KW-0677">Repeat</keyword>
<evidence type="ECO:0000250" key="1"/>
<evidence type="ECO:0000255" key="2"/>
<evidence type="ECO:0000255" key="3">
    <source>
        <dbReference type="PROSITE-ProRule" id="PRU00448"/>
    </source>
</evidence>
<evidence type="ECO:0000305" key="4"/>
<accession>Q16981</accession>
<proteinExistence type="evidence at transcript level"/>